<reference key="1">
    <citation type="submission" date="1996-03" db="EMBL/GenBank/DDBJ databases">
        <authorList>
            <person name="Krogh S."/>
            <person name="O'Reilly M."/>
            <person name="Nolan N."/>
            <person name="Devine K.M."/>
        </authorList>
    </citation>
    <scope>NUCLEOTIDE SEQUENCE [GENOMIC DNA]</scope>
    <source>
        <strain>168</strain>
    </source>
</reference>
<reference key="2">
    <citation type="journal article" date="1997" name="Nature">
        <title>The complete genome sequence of the Gram-positive bacterium Bacillus subtilis.</title>
        <authorList>
            <person name="Kunst F."/>
            <person name="Ogasawara N."/>
            <person name="Moszer I."/>
            <person name="Albertini A.M."/>
            <person name="Alloni G."/>
            <person name="Azevedo V."/>
            <person name="Bertero M.G."/>
            <person name="Bessieres P."/>
            <person name="Bolotin A."/>
            <person name="Borchert S."/>
            <person name="Borriss R."/>
            <person name="Boursier L."/>
            <person name="Brans A."/>
            <person name="Braun M."/>
            <person name="Brignell S.C."/>
            <person name="Bron S."/>
            <person name="Brouillet S."/>
            <person name="Bruschi C.V."/>
            <person name="Caldwell B."/>
            <person name="Capuano V."/>
            <person name="Carter N.M."/>
            <person name="Choi S.-K."/>
            <person name="Codani J.-J."/>
            <person name="Connerton I.F."/>
            <person name="Cummings N.J."/>
            <person name="Daniel R.A."/>
            <person name="Denizot F."/>
            <person name="Devine K.M."/>
            <person name="Duesterhoeft A."/>
            <person name="Ehrlich S.D."/>
            <person name="Emmerson P.T."/>
            <person name="Entian K.-D."/>
            <person name="Errington J."/>
            <person name="Fabret C."/>
            <person name="Ferrari E."/>
            <person name="Foulger D."/>
            <person name="Fritz C."/>
            <person name="Fujita M."/>
            <person name="Fujita Y."/>
            <person name="Fuma S."/>
            <person name="Galizzi A."/>
            <person name="Galleron N."/>
            <person name="Ghim S.-Y."/>
            <person name="Glaser P."/>
            <person name="Goffeau A."/>
            <person name="Golightly E.J."/>
            <person name="Grandi G."/>
            <person name="Guiseppi G."/>
            <person name="Guy B.J."/>
            <person name="Haga K."/>
            <person name="Haiech J."/>
            <person name="Harwood C.R."/>
            <person name="Henaut A."/>
            <person name="Hilbert H."/>
            <person name="Holsappel S."/>
            <person name="Hosono S."/>
            <person name="Hullo M.-F."/>
            <person name="Itaya M."/>
            <person name="Jones L.-M."/>
            <person name="Joris B."/>
            <person name="Karamata D."/>
            <person name="Kasahara Y."/>
            <person name="Klaerr-Blanchard M."/>
            <person name="Klein C."/>
            <person name="Kobayashi Y."/>
            <person name="Koetter P."/>
            <person name="Koningstein G."/>
            <person name="Krogh S."/>
            <person name="Kumano M."/>
            <person name="Kurita K."/>
            <person name="Lapidus A."/>
            <person name="Lardinois S."/>
            <person name="Lauber J."/>
            <person name="Lazarevic V."/>
            <person name="Lee S.-M."/>
            <person name="Levine A."/>
            <person name="Liu H."/>
            <person name="Masuda S."/>
            <person name="Mauel C."/>
            <person name="Medigue C."/>
            <person name="Medina N."/>
            <person name="Mellado R.P."/>
            <person name="Mizuno M."/>
            <person name="Moestl D."/>
            <person name="Nakai S."/>
            <person name="Noback M."/>
            <person name="Noone D."/>
            <person name="O'Reilly M."/>
            <person name="Ogawa K."/>
            <person name="Ogiwara A."/>
            <person name="Oudega B."/>
            <person name="Park S.-H."/>
            <person name="Parro V."/>
            <person name="Pohl T.M."/>
            <person name="Portetelle D."/>
            <person name="Porwollik S."/>
            <person name="Prescott A.M."/>
            <person name="Presecan E."/>
            <person name="Pujic P."/>
            <person name="Purnelle B."/>
            <person name="Rapoport G."/>
            <person name="Rey M."/>
            <person name="Reynolds S."/>
            <person name="Rieger M."/>
            <person name="Rivolta C."/>
            <person name="Rocha E."/>
            <person name="Roche B."/>
            <person name="Rose M."/>
            <person name="Sadaie Y."/>
            <person name="Sato T."/>
            <person name="Scanlan E."/>
            <person name="Schleich S."/>
            <person name="Schroeter R."/>
            <person name="Scoffone F."/>
            <person name="Sekiguchi J."/>
            <person name="Sekowska A."/>
            <person name="Seror S.J."/>
            <person name="Serror P."/>
            <person name="Shin B.-S."/>
            <person name="Soldo B."/>
            <person name="Sorokin A."/>
            <person name="Tacconi E."/>
            <person name="Takagi T."/>
            <person name="Takahashi H."/>
            <person name="Takemaru K."/>
            <person name="Takeuchi M."/>
            <person name="Tamakoshi A."/>
            <person name="Tanaka T."/>
            <person name="Terpstra P."/>
            <person name="Tognoni A."/>
            <person name="Tosato V."/>
            <person name="Uchiyama S."/>
            <person name="Vandenbol M."/>
            <person name="Vannier F."/>
            <person name="Vassarotti A."/>
            <person name="Viari A."/>
            <person name="Wambutt R."/>
            <person name="Wedler E."/>
            <person name="Wedler H."/>
            <person name="Weitzenegger T."/>
            <person name="Winters P."/>
            <person name="Wipat A."/>
            <person name="Yamamoto H."/>
            <person name="Yamane K."/>
            <person name="Yasumoto K."/>
            <person name="Yata K."/>
            <person name="Yoshida K."/>
            <person name="Yoshikawa H.-F."/>
            <person name="Zumstein E."/>
            <person name="Yoshikawa H."/>
            <person name="Danchin A."/>
        </authorList>
    </citation>
    <scope>NUCLEOTIDE SEQUENCE [LARGE SCALE GENOMIC DNA]</scope>
    <source>
        <strain>168</strain>
    </source>
</reference>
<accession>P54336</accession>
<keyword id="KW-1185">Reference proteome</keyword>
<organism>
    <name type="scientific">Bacillus subtilis (strain 168)</name>
    <dbReference type="NCBI Taxonomy" id="224308"/>
    <lineage>
        <taxon>Bacteria</taxon>
        <taxon>Bacillati</taxon>
        <taxon>Bacillota</taxon>
        <taxon>Bacilli</taxon>
        <taxon>Bacillales</taxon>
        <taxon>Bacillaceae</taxon>
        <taxon>Bacillus</taxon>
    </lineage>
</organism>
<gene>
    <name type="primary">xkdQ</name>
    <name type="ordered locus">BSU12700</name>
</gene>
<sequence length="325" mass="36916">MIELFVIKDTEWLELVAESVSLEGHRYQAPRSIEATIVTKQGDQTYYSVSEGDTVLFKWKGKELFRGIVFARTPDEHTLAFSAYDMLQYLVKNQDMYVFSNQRADQIIRRIASDFQIPTTSIANTGHTIKSLVIKNDTTLYDIILKALKQTKSQTGRHYQLYSEKGKLGLRAWPDPSEVWVLETGVNITGYQYSTSINDTATRVVLRRQKDNKTYKASAKDSSGLNKYGVLQYTETVTDDINQAQLQQRADVRLAEKKGVKKELKNIQAVGIPEVQSGLPVYISIPEAGIKKTYWVDTDRHEFKGTKHTMTIDVVEKNTMPEGVS</sequence>
<dbReference type="EMBL" id="Z70177">
    <property type="protein sequence ID" value="CAA94050.1"/>
    <property type="molecule type" value="Genomic_DNA"/>
</dbReference>
<dbReference type="EMBL" id="AL009126">
    <property type="protein sequence ID" value="CAB13127.1"/>
    <property type="molecule type" value="Genomic_DNA"/>
</dbReference>
<dbReference type="PIR" id="H69732">
    <property type="entry name" value="H69732"/>
</dbReference>
<dbReference type="RefSeq" id="NP_389152.1">
    <property type="nucleotide sequence ID" value="NC_000964.3"/>
</dbReference>
<dbReference type="RefSeq" id="WP_003245730.1">
    <property type="nucleotide sequence ID" value="NZ_OZ025638.1"/>
</dbReference>
<dbReference type="SMR" id="P54336"/>
<dbReference type="FunCoup" id="P54336">
    <property type="interactions" value="58"/>
</dbReference>
<dbReference type="STRING" id="224308.BSU12700"/>
<dbReference type="PaxDb" id="224308-BSU12700"/>
<dbReference type="EnsemblBacteria" id="CAB13127">
    <property type="protein sequence ID" value="CAB13127"/>
    <property type="gene ID" value="BSU_12700"/>
</dbReference>
<dbReference type="GeneID" id="938173"/>
<dbReference type="KEGG" id="bsu:BSU12700"/>
<dbReference type="PATRIC" id="fig|224308.179.peg.1377"/>
<dbReference type="eggNOG" id="COG4193">
    <property type="taxonomic scope" value="Bacteria"/>
</dbReference>
<dbReference type="InParanoid" id="P54336"/>
<dbReference type="OrthoDB" id="1698671at2"/>
<dbReference type="PhylomeDB" id="P54336"/>
<dbReference type="BioCyc" id="BSUB:BSU12700-MONOMER"/>
<dbReference type="Proteomes" id="UP000001570">
    <property type="component" value="Chromosome"/>
</dbReference>
<dbReference type="InterPro" id="IPR052196">
    <property type="entry name" value="Bact_Kbp"/>
</dbReference>
<dbReference type="InterPro" id="IPR056937">
    <property type="entry name" value="YQBQ-like_dom"/>
</dbReference>
<dbReference type="PANTHER" id="PTHR34700:SF3">
    <property type="entry name" value="PHAGE-LIKE ELEMENT PBSX PROTEIN XKDQ"/>
    <property type="match status" value="1"/>
</dbReference>
<dbReference type="PANTHER" id="PTHR34700">
    <property type="entry name" value="POTASSIUM BINDING PROTEIN KBP"/>
    <property type="match status" value="1"/>
</dbReference>
<dbReference type="Pfam" id="PF24032">
    <property type="entry name" value="YQBQ"/>
    <property type="match status" value="1"/>
</dbReference>
<dbReference type="SUPFAM" id="SSF69279">
    <property type="entry name" value="Phage tail proteins"/>
    <property type="match status" value="1"/>
</dbReference>
<comment type="similarity">
    <text evidence="1">To B.subtilis YqbQ.</text>
</comment>
<feature type="chain" id="PRO_0000066030" description="Phage-like element PBSX protein XkdQ">
    <location>
        <begin position="1"/>
        <end position="325"/>
    </location>
</feature>
<protein>
    <recommendedName>
        <fullName>Phage-like element PBSX protein XkdQ</fullName>
    </recommendedName>
</protein>
<evidence type="ECO:0000305" key="1"/>
<name>XKDQ_BACSU</name>
<proteinExistence type="predicted"/>